<feature type="chain" id="PRO_0000073509" description="Calcineurin B-like protein 8">
    <location>
        <begin position="1"/>
        <end position="214"/>
    </location>
</feature>
<feature type="domain" description="EF-hand 1" evidence="5">
    <location>
        <begin position="35"/>
        <end position="70"/>
    </location>
</feature>
<feature type="domain" description="EF-hand 2" evidence="2">
    <location>
        <begin position="71"/>
        <end position="106"/>
    </location>
</feature>
<feature type="domain" description="EF-hand 3" evidence="2">
    <location>
        <begin position="108"/>
        <end position="143"/>
    </location>
</feature>
<feature type="domain" description="EF-hand 4" evidence="2">
    <location>
        <begin position="152"/>
        <end position="187"/>
    </location>
</feature>
<feature type="binding site" evidence="2">
    <location>
        <position position="165"/>
    </location>
    <ligand>
        <name>Ca(2+)</name>
        <dbReference type="ChEBI" id="CHEBI:29108"/>
    </ligand>
</feature>
<feature type="binding site" evidence="2">
    <location>
        <position position="167"/>
    </location>
    <ligand>
        <name>Ca(2+)</name>
        <dbReference type="ChEBI" id="CHEBI:29108"/>
    </ligand>
</feature>
<feature type="binding site" evidence="2">
    <location>
        <position position="169"/>
    </location>
    <ligand>
        <name>Ca(2+)</name>
        <dbReference type="ChEBI" id="CHEBI:29108"/>
    </ligand>
</feature>
<feature type="binding site" evidence="2">
    <location>
        <position position="171"/>
    </location>
    <ligand>
        <name>Ca(2+)</name>
        <dbReference type="ChEBI" id="CHEBI:29108"/>
    </ligand>
</feature>
<feature type="binding site" evidence="2">
    <location>
        <position position="176"/>
    </location>
    <ligand>
        <name>Ca(2+)</name>
        <dbReference type="ChEBI" id="CHEBI:29108"/>
    </ligand>
</feature>
<feature type="modified residue" description="Phosphoserine" evidence="1">
    <location>
        <position position="205"/>
    </location>
</feature>
<sequence>MLAFVKCFSLKRAKHPRGYEDPHVLASETPFTVNEIEALHDLFKKLSTSIINDGLIHKEEFLLALFRNGSMQNLFADRVFYMFDRKRNGVIEFGEFVRSLSIFHPYTPEHEKSAFMFKLFDLHGTGFIEPHELKKMVGALLGETDLELSEESIEAIVEQTMLEVDTNKDGKIDEEEWKELVAKNPSILKNMTLPYLKEVTLAFPSFVLDSEVED</sequence>
<protein>
    <recommendedName>
        <fullName>Calcineurin B-like protein 8</fullName>
    </recommendedName>
</protein>
<reference key="1">
    <citation type="journal article" date="2000" name="Plant Physiol.">
        <title>Interaction specificity of Arabidopsis calcineurin B-like calcium sensors and their target kinases.</title>
        <authorList>
            <person name="Kim K.-N."/>
            <person name="Cheong Y.H."/>
            <person name="Gupta R."/>
            <person name="Luan S."/>
        </authorList>
    </citation>
    <scope>NUCLEOTIDE SEQUENCE [MRNA]</scope>
    <source>
        <strain>cv. Columbia</strain>
    </source>
</reference>
<reference key="2">
    <citation type="submission" date="2001-08" db="EMBL/GenBank/DDBJ databases">
        <title>Molecular characterization of the CBL gene family from Arabidopsis thaliana.</title>
        <authorList>
            <person name="Albrecht V."/>
            <person name="Weinl S."/>
            <person name="Blazevic D."/>
            <person name="Kudla J."/>
        </authorList>
    </citation>
    <scope>NUCLEOTIDE SEQUENCE [MRNA]</scope>
</reference>
<reference key="3">
    <citation type="journal article" date="2000" name="Nature">
        <title>Sequence and analysis of chromosome 1 of the plant Arabidopsis thaliana.</title>
        <authorList>
            <person name="Theologis A."/>
            <person name="Ecker J.R."/>
            <person name="Palm C.J."/>
            <person name="Federspiel N.A."/>
            <person name="Kaul S."/>
            <person name="White O."/>
            <person name="Alonso J."/>
            <person name="Altafi H."/>
            <person name="Araujo R."/>
            <person name="Bowman C.L."/>
            <person name="Brooks S.Y."/>
            <person name="Buehler E."/>
            <person name="Chan A."/>
            <person name="Chao Q."/>
            <person name="Chen H."/>
            <person name="Cheuk R.F."/>
            <person name="Chin C.W."/>
            <person name="Chung M.K."/>
            <person name="Conn L."/>
            <person name="Conway A.B."/>
            <person name="Conway A.R."/>
            <person name="Creasy T.H."/>
            <person name="Dewar K."/>
            <person name="Dunn P."/>
            <person name="Etgu P."/>
            <person name="Feldblyum T.V."/>
            <person name="Feng J.-D."/>
            <person name="Fong B."/>
            <person name="Fujii C.Y."/>
            <person name="Gill J.E."/>
            <person name="Goldsmith A.D."/>
            <person name="Haas B."/>
            <person name="Hansen N.F."/>
            <person name="Hughes B."/>
            <person name="Huizar L."/>
            <person name="Hunter J.L."/>
            <person name="Jenkins J."/>
            <person name="Johnson-Hopson C."/>
            <person name="Khan S."/>
            <person name="Khaykin E."/>
            <person name="Kim C.J."/>
            <person name="Koo H.L."/>
            <person name="Kremenetskaia I."/>
            <person name="Kurtz D.B."/>
            <person name="Kwan A."/>
            <person name="Lam B."/>
            <person name="Langin-Hooper S."/>
            <person name="Lee A."/>
            <person name="Lee J.M."/>
            <person name="Lenz C.A."/>
            <person name="Li J.H."/>
            <person name="Li Y.-P."/>
            <person name="Lin X."/>
            <person name="Liu S.X."/>
            <person name="Liu Z.A."/>
            <person name="Luros J.S."/>
            <person name="Maiti R."/>
            <person name="Marziali A."/>
            <person name="Militscher J."/>
            <person name="Miranda M."/>
            <person name="Nguyen M."/>
            <person name="Nierman W.C."/>
            <person name="Osborne B.I."/>
            <person name="Pai G."/>
            <person name="Peterson J."/>
            <person name="Pham P.K."/>
            <person name="Rizzo M."/>
            <person name="Rooney T."/>
            <person name="Rowley D."/>
            <person name="Sakano H."/>
            <person name="Salzberg S.L."/>
            <person name="Schwartz J.R."/>
            <person name="Shinn P."/>
            <person name="Southwick A.M."/>
            <person name="Sun H."/>
            <person name="Tallon L.J."/>
            <person name="Tambunga G."/>
            <person name="Toriumi M.J."/>
            <person name="Town C.D."/>
            <person name="Utterback T."/>
            <person name="Van Aken S."/>
            <person name="Vaysberg M."/>
            <person name="Vysotskaia V.S."/>
            <person name="Walker M."/>
            <person name="Wu D."/>
            <person name="Yu G."/>
            <person name="Fraser C.M."/>
            <person name="Venter J.C."/>
            <person name="Davis R.W."/>
        </authorList>
    </citation>
    <scope>NUCLEOTIDE SEQUENCE [LARGE SCALE GENOMIC DNA]</scope>
    <source>
        <strain>cv. Columbia</strain>
    </source>
</reference>
<reference key="4">
    <citation type="journal article" date="2017" name="Plant J.">
        <title>Araport11: a complete reannotation of the Arabidopsis thaliana reference genome.</title>
        <authorList>
            <person name="Cheng C.Y."/>
            <person name="Krishnakumar V."/>
            <person name="Chan A.P."/>
            <person name="Thibaud-Nissen F."/>
            <person name="Schobel S."/>
            <person name="Town C.D."/>
        </authorList>
    </citation>
    <scope>GENOME REANNOTATION</scope>
    <source>
        <strain>cv. Columbia</strain>
    </source>
</reference>
<reference key="5">
    <citation type="journal article" date="2004" name="Plant Physiol.">
        <title>Calcium sensors and their interacting protein kinases: genomics of the Arabidopsis and rice CBL-CIPK signaling networks.</title>
        <authorList>
            <person name="Kolukisaoglu U."/>
            <person name="Weinl S."/>
            <person name="Blazevic D."/>
            <person name="Batistic O."/>
            <person name="Kudla J."/>
        </authorList>
    </citation>
    <scope>GENE FAMILY</scope>
</reference>
<reference key="6">
    <citation type="journal article" date="2006" name="Cell">
        <title>A protein kinase, interacting with two calcineurin B-like proteins, regulates K+ transporter AKT1 in Arabidopsis.</title>
        <authorList>
            <person name="Xu J."/>
            <person name="Li H.-D."/>
            <person name="Chen L.-Q."/>
            <person name="Wang Y."/>
            <person name="Liu L.-L."/>
            <person name="He L."/>
            <person name="Wu W.-H."/>
        </authorList>
    </citation>
    <scope>INTERACTION WITH CIPK23</scope>
</reference>
<reference key="7">
    <citation type="journal article" date="2010" name="Plant J.">
        <title>CBL-mediated targeting of CIPKs facilitates the decoding of calcium signals emanating from distinct cellular stores.</title>
        <authorList>
            <person name="Batistic O."/>
            <person name="Waadt R."/>
            <person name="Steinhorst L."/>
            <person name="Held K."/>
            <person name="Kudla J."/>
        </authorList>
    </citation>
    <scope>SUBCELLULAR LOCATION</scope>
    <scope>DOMAIN</scope>
    <scope>INTERACTION WITH CIPK14</scope>
</reference>
<accession>Q9FUQ7</accession>
<accession>Q9SGW7</accession>
<name>CNBL8_ARATH</name>
<comment type="function">
    <text>Acts as a calcium sensor. CBL proteins interact with CIPK serine-threonine protein kinases. Binding of a CBL protein to the regulatory NAF domain of a CIPK protein lead to the activation of the kinase in a calcium-dependent manner.</text>
</comment>
<comment type="subunit">
    <text evidence="3 4">Interacts with CIPK23. Interacts with CIPK14 at the cell membrane exclusively.</text>
</comment>
<comment type="subcellular location">
    <subcellularLocation>
        <location evidence="4">Cytoplasm</location>
    </subcellularLocation>
    <subcellularLocation>
        <location evidence="4">Nucleus</location>
    </subcellularLocation>
    <subcellularLocation>
        <location evidence="4">Cell membrane</location>
    </subcellularLocation>
</comment>
<comment type="domain">
    <text evidence="4">The N-terminal 16 amino acids are sufficient for the cell membrane targeting of a heterologous protein.</text>
</comment>
<comment type="similarity">
    <text evidence="5">Belongs to the calcineurin regulatory subunit family.</text>
</comment>
<comment type="sequence caution" evidence="5">
    <conflict type="erroneous gene model prediction">
        <sequence resource="EMBL-CDS" id="AAF19691"/>
    </conflict>
</comment>
<keyword id="KW-0106">Calcium</keyword>
<keyword id="KW-1003">Cell membrane</keyword>
<keyword id="KW-0963">Cytoplasm</keyword>
<keyword id="KW-0472">Membrane</keyword>
<keyword id="KW-0479">Metal-binding</keyword>
<keyword id="KW-0539">Nucleus</keyword>
<keyword id="KW-0597">Phosphoprotein</keyword>
<keyword id="KW-1185">Reference proteome</keyword>
<keyword id="KW-0677">Repeat</keyword>
<organism>
    <name type="scientific">Arabidopsis thaliana</name>
    <name type="common">Mouse-ear cress</name>
    <dbReference type="NCBI Taxonomy" id="3702"/>
    <lineage>
        <taxon>Eukaryota</taxon>
        <taxon>Viridiplantae</taxon>
        <taxon>Streptophyta</taxon>
        <taxon>Embryophyta</taxon>
        <taxon>Tracheophyta</taxon>
        <taxon>Spermatophyta</taxon>
        <taxon>Magnoliopsida</taxon>
        <taxon>eudicotyledons</taxon>
        <taxon>Gunneridae</taxon>
        <taxon>Pentapetalae</taxon>
        <taxon>rosids</taxon>
        <taxon>malvids</taxon>
        <taxon>Brassicales</taxon>
        <taxon>Brassicaceae</taxon>
        <taxon>Camelineae</taxon>
        <taxon>Arabidopsis</taxon>
    </lineage>
</organism>
<gene>
    <name type="primary">CBL8</name>
    <name type="ordered locus">At1g64480</name>
    <name type="ORF">F1N19.5</name>
</gene>
<proteinExistence type="evidence at protein level"/>
<dbReference type="EMBL" id="AF290433">
    <property type="protein sequence ID" value="AAG10058.1"/>
    <property type="molecule type" value="mRNA"/>
</dbReference>
<dbReference type="EMBL" id="AF411957">
    <property type="protein sequence ID" value="AAL10300.1"/>
    <property type="molecule type" value="mRNA"/>
</dbReference>
<dbReference type="EMBL" id="AC009519">
    <property type="protein sequence ID" value="AAF19691.1"/>
    <property type="status" value="ALT_SEQ"/>
    <property type="molecule type" value="Genomic_DNA"/>
</dbReference>
<dbReference type="EMBL" id="CP002684">
    <property type="protein sequence ID" value="AEE34245.1"/>
    <property type="molecule type" value="Genomic_DNA"/>
</dbReference>
<dbReference type="EMBL" id="CP002684">
    <property type="protein sequence ID" value="ANM60358.1"/>
    <property type="molecule type" value="Genomic_DNA"/>
</dbReference>
<dbReference type="EMBL" id="CP002684">
    <property type="protein sequence ID" value="ANM60359.1"/>
    <property type="molecule type" value="Genomic_DNA"/>
</dbReference>
<dbReference type="PIR" id="F96668">
    <property type="entry name" value="F96668"/>
</dbReference>
<dbReference type="RefSeq" id="NP_001319319.1">
    <property type="nucleotide sequence ID" value="NM_001334162.1"/>
</dbReference>
<dbReference type="RefSeq" id="NP_001322653.1">
    <property type="nucleotide sequence ID" value="NM_001334163.1"/>
</dbReference>
<dbReference type="RefSeq" id="NP_176629.1">
    <property type="nucleotide sequence ID" value="NM_105123.2"/>
</dbReference>
<dbReference type="SMR" id="Q9FUQ7"/>
<dbReference type="BioGRID" id="27977">
    <property type="interactions" value="3"/>
</dbReference>
<dbReference type="FunCoup" id="Q9FUQ7">
    <property type="interactions" value="393"/>
</dbReference>
<dbReference type="IntAct" id="Q9FUQ7">
    <property type="interactions" value="1"/>
</dbReference>
<dbReference type="STRING" id="3702.Q9FUQ7"/>
<dbReference type="TCDB" id="8.A.82.2.1">
    <property type="family name" value="the calmodulin calcium binding protein (calmodulin) family"/>
</dbReference>
<dbReference type="PaxDb" id="3702-AT1G64480.1"/>
<dbReference type="EnsemblPlants" id="AT1G64480.1">
    <property type="protein sequence ID" value="AT1G64480.1"/>
    <property type="gene ID" value="AT1G64480"/>
</dbReference>
<dbReference type="EnsemblPlants" id="AT1G64480.2">
    <property type="protein sequence ID" value="AT1G64480.2"/>
    <property type="gene ID" value="AT1G64480"/>
</dbReference>
<dbReference type="EnsemblPlants" id="AT1G64480.3">
    <property type="protein sequence ID" value="AT1G64480.3"/>
    <property type="gene ID" value="AT1G64480"/>
</dbReference>
<dbReference type="GeneID" id="842756"/>
<dbReference type="Gramene" id="AT1G64480.1">
    <property type="protein sequence ID" value="AT1G64480.1"/>
    <property type="gene ID" value="AT1G64480"/>
</dbReference>
<dbReference type="Gramene" id="AT1G64480.2">
    <property type="protein sequence ID" value="AT1G64480.2"/>
    <property type="gene ID" value="AT1G64480"/>
</dbReference>
<dbReference type="Gramene" id="AT1G64480.3">
    <property type="protein sequence ID" value="AT1G64480.3"/>
    <property type="gene ID" value="AT1G64480"/>
</dbReference>
<dbReference type="KEGG" id="ath:AT1G64480"/>
<dbReference type="Araport" id="AT1G64480"/>
<dbReference type="TAIR" id="AT1G64480">
    <property type="gene designation" value="CBL8"/>
</dbReference>
<dbReference type="eggNOG" id="KOG0034">
    <property type="taxonomic scope" value="Eukaryota"/>
</dbReference>
<dbReference type="HOGENOM" id="CLU_061288_21_0_1"/>
<dbReference type="InParanoid" id="Q9FUQ7"/>
<dbReference type="OrthoDB" id="191686at2759"/>
<dbReference type="PhylomeDB" id="Q9FUQ7"/>
<dbReference type="PRO" id="PR:Q9FUQ7"/>
<dbReference type="Proteomes" id="UP000006548">
    <property type="component" value="Chromosome 1"/>
</dbReference>
<dbReference type="ExpressionAtlas" id="Q9FUQ7">
    <property type="expression patterns" value="baseline and differential"/>
</dbReference>
<dbReference type="GO" id="GO:0005737">
    <property type="term" value="C:cytoplasm"/>
    <property type="evidence" value="ECO:0007669"/>
    <property type="project" value="UniProtKB-SubCell"/>
</dbReference>
<dbReference type="GO" id="GO:0016020">
    <property type="term" value="C:membrane"/>
    <property type="evidence" value="ECO:0000314"/>
    <property type="project" value="TAIR"/>
</dbReference>
<dbReference type="GO" id="GO:0005634">
    <property type="term" value="C:nucleus"/>
    <property type="evidence" value="ECO:0007669"/>
    <property type="project" value="UniProtKB-SubCell"/>
</dbReference>
<dbReference type="GO" id="GO:0005886">
    <property type="term" value="C:plasma membrane"/>
    <property type="evidence" value="ECO:0007669"/>
    <property type="project" value="UniProtKB-SubCell"/>
</dbReference>
<dbReference type="GO" id="GO:0005509">
    <property type="term" value="F:calcium ion binding"/>
    <property type="evidence" value="ECO:0000250"/>
    <property type="project" value="TAIR"/>
</dbReference>
<dbReference type="GO" id="GO:0019900">
    <property type="term" value="F:kinase binding"/>
    <property type="evidence" value="ECO:0007669"/>
    <property type="project" value="InterPro"/>
</dbReference>
<dbReference type="GO" id="GO:0019722">
    <property type="term" value="P:calcium-mediated signaling"/>
    <property type="evidence" value="ECO:0000304"/>
    <property type="project" value="TAIR"/>
</dbReference>
<dbReference type="CDD" id="cd00051">
    <property type="entry name" value="EFh"/>
    <property type="match status" value="1"/>
</dbReference>
<dbReference type="FunFam" id="1.10.238.10:FF:000073">
    <property type="entry name" value="calcineurin B-like protein 3"/>
    <property type="match status" value="1"/>
</dbReference>
<dbReference type="Gene3D" id="1.10.238.10">
    <property type="entry name" value="EF-hand"/>
    <property type="match status" value="1"/>
</dbReference>
<dbReference type="InterPro" id="IPR045198">
    <property type="entry name" value="CNBL1-10"/>
</dbReference>
<dbReference type="InterPro" id="IPR011992">
    <property type="entry name" value="EF-hand-dom_pair"/>
</dbReference>
<dbReference type="InterPro" id="IPR018247">
    <property type="entry name" value="EF_Hand_1_Ca_BS"/>
</dbReference>
<dbReference type="InterPro" id="IPR002048">
    <property type="entry name" value="EF_hand_dom"/>
</dbReference>
<dbReference type="PANTHER" id="PTHR23056">
    <property type="entry name" value="CALCINEURIN B"/>
    <property type="match status" value="1"/>
</dbReference>
<dbReference type="PANTHER" id="PTHR23056:SF147">
    <property type="entry name" value="CALCINEURIN B-LIKE PROTEIN 8"/>
    <property type="match status" value="1"/>
</dbReference>
<dbReference type="Pfam" id="PF13499">
    <property type="entry name" value="EF-hand_7"/>
    <property type="match status" value="1"/>
</dbReference>
<dbReference type="Pfam" id="PF13833">
    <property type="entry name" value="EF-hand_8"/>
    <property type="match status" value="1"/>
</dbReference>
<dbReference type="PRINTS" id="PR00450">
    <property type="entry name" value="RECOVERIN"/>
</dbReference>
<dbReference type="SMART" id="SM00054">
    <property type="entry name" value="EFh"/>
    <property type="match status" value="3"/>
</dbReference>
<dbReference type="SUPFAM" id="SSF47473">
    <property type="entry name" value="EF-hand"/>
    <property type="match status" value="1"/>
</dbReference>
<dbReference type="PROSITE" id="PS00018">
    <property type="entry name" value="EF_HAND_1"/>
    <property type="match status" value="1"/>
</dbReference>
<dbReference type="PROSITE" id="PS50222">
    <property type="entry name" value="EF_HAND_2"/>
    <property type="match status" value="3"/>
</dbReference>
<evidence type="ECO:0000250" key="1">
    <source>
        <dbReference type="UniProtKB" id="Q8LAS7"/>
    </source>
</evidence>
<evidence type="ECO:0000255" key="2">
    <source>
        <dbReference type="PROSITE-ProRule" id="PRU00448"/>
    </source>
</evidence>
<evidence type="ECO:0000269" key="3">
    <source>
    </source>
</evidence>
<evidence type="ECO:0000269" key="4">
    <source>
    </source>
</evidence>
<evidence type="ECO:0000305" key="5"/>